<organism>
    <name type="scientific">Amoebophilus asiaticus (strain 5a2)</name>
    <dbReference type="NCBI Taxonomy" id="452471"/>
    <lineage>
        <taxon>Bacteria</taxon>
        <taxon>Pseudomonadati</taxon>
        <taxon>Bacteroidota</taxon>
        <taxon>Cytophagia</taxon>
        <taxon>Cytophagales</taxon>
        <taxon>Amoebophilaceae</taxon>
        <taxon>Candidatus Amoebophilus</taxon>
    </lineage>
</organism>
<protein>
    <recommendedName>
        <fullName evidence="1">Recombination protein RecR</fullName>
    </recommendedName>
</protein>
<evidence type="ECO:0000255" key="1">
    <source>
        <dbReference type="HAMAP-Rule" id="MF_00017"/>
    </source>
</evidence>
<reference key="1">
    <citation type="journal article" date="2010" name="J. Bacteriol.">
        <title>The genome of the amoeba symbiont 'Candidatus Amoebophilus asiaticus' reveals common mechanisms for host cell interaction among amoeba-associated bacteria.</title>
        <authorList>
            <person name="Schmitz-Esser S."/>
            <person name="Tischler P."/>
            <person name="Arnold R."/>
            <person name="Montanaro J."/>
            <person name="Wagner M."/>
            <person name="Rattei T."/>
            <person name="Horn M."/>
        </authorList>
    </citation>
    <scope>NUCLEOTIDE SEQUENCE [LARGE SCALE GENOMIC DNA]</scope>
    <source>
        <strain>5a2</strain>
    </source>
</reference>
<sequence>MAYTSKLIEEAINEISALPGIGKKTALRLVLFLLKSNPEQTERLATSLHKLRSQIQYCQKCHNISDTTLCSICANPHRDTGLICVVENIQDVIAIENTAQYKGIYHVLGGLISPVEGIGPEQLYIEHLVQRVQQEQPQEIIFALSTTIEGDTTTFYITKKLKEFPVKLSNIARGVAVGSELEYTDEMTLARSIKERILYH</sequence>
<accession>B3ES21</accession>
<gene>
    <name evidence="1" type="primary">recR</name>
    <name type="ordered locus">Aasi_0625</name>
</gene>
<keyword id="KW-0227">DNA damage</keyword>
<keyword id="KW-0233">DNA recombination</keyword>
<keyword id="KW-0234">DNA repair</keyword>
<keyword id="KW-0479">Metal-binding</keyword>
<keyword id="KW-1185">Reference proteome</keyword>
<keyword id="KW-0862">Zinc</keyword>
<keyword id="KW-0863">Zinc-finger</keyword>
<dbReference type="EMBL" id="CP001102">
    <property type="protein sequence ID" value="ACE06023.1"/>
    <property type="molecule type" value="Genomic_DNA"/>
</dbReference>
<dbReference type="RefSeq" id="WP_012472791.1">
    <property type="nucleotide sequence ID" value="NC_010830.1"/>
</dbReference>
<dbReference type="SMR" id="B3ES21"/>
<dbReference type="STRING" id="452471.Aasi_0625"/>
<dbReference type="KEGG" id="aas:Aasi_0625"/>
<dbReference type="eggNOG" id="COG0353">
    <property type="taxonomic scope" value="Bacteria"/>
</dbReference>
<dbReference type="HOGENOM" id="CLU_060739_1_1_10"/>
<dbReference type="OrthoDB" id="9802672at2"/>
<dbReference type="Proteomes" id="UP000001227">
    <property type="component" value="Chromosome"/>
</dbReference>
<dbReference type="GO" id="GO:0003677">
    <property type="term" value="F:DNA binding"/>
    <property type="evidence" value="ECO:0007669"/>
    <property type="project" value="UniProtKB-UniRule"/>
</dbReference>
<dbReference type="GO" id="GO:0008270">
    <property type="term" value="F:zinc ion binding"/>
    <property type="evidence" value="ECO:0007669"/>
    <property type="project" value="UniProtKB-KW"/>
</dbReference>
<dbReference type="GO" id="GO:0006310">
    <property type="term" value="P:DNA recombination"/>
    <property type="evidence" value="ECO:0007669"/>
    <property type="project" value="UniProtKB-UniRule"/>
</dbReference>
<dbReference type="GO" id="GO:0006281">
    <property type="term" value="P:DNA repair"/>
    <property type="evidence" value="ECO:0007669"/>
    <property type="project" value="UniProtKB-UniRule"/>
</dbReference>
<dbReference type="CDD" id="cd01025">
    <property type="entry name" value="TOPRIM_recR"/>
    <property type="match status" value="1"/>
</dbReference>
<dbReference type="Gene3D" id="3.30.60.80">
    <property type="match status" value="1"/>
</dbReference>
<dbReference type="Gene3D" id="3.40.1360.10">
    <property type="match status" value="1"/>
</dbReference>
<dbReference type="Gene3D" id="1.10.8.420">
    <property type="entry name" value="RecR Domain 1"/>
    <property type="match status" value="1"/>
</dbReference>
<dbReference type="HAMAP" id="MF_00017">
    <property type="entry name" value="RecR"/>
    <property type="match status" value="1"/>
</dbReference>
<dbReference type="InterPro" id="IPR000093">
    <property type="entry name" value="DNA_Rcmb_RecR"/>
</dbReference>
<dbReference type="InterPro" id="IPR023627">
    <property type="entry name" value="Rcmb_RecR"/>
</dbReference>
<dbReference type="InterPro" id="IPR015967">
    <property type="entry name" value="Rcmb_RecR_Znf"/>
</dbReference>
<dbReference type="InterPro" id="IPR006171">
    <property type="entry name" value="TOPRIM_dom"/>
</dbReference>
<dbReference type="InterPro" id="IPR034137">
    <property type="entry name" value="TOPRIM_RecR"/>
</dbReference>
<dbReference type="NCBIfam" id="TIGR00615">
    <property type="entry name" value="recR"/>
    <property type="match status" value="1"/>
</dbReference>
<dbReference type="PANTHER" id="PTHR30446">
    <property type="entry name" value="RECOMBINATION PROTEIN RECR"/>
    <property type="match status" value="1"/>
</dbReference>
<dbReference type="PANTHER" id="PTHR30446:SF0">
    <property type="entry name" value="RECOMBINATION PROTEIN RECR"/>
    <property type="match status" value="1"/>
</dbReference>
<dbReference type="Pfam" id="PF21175">
    <property type="entry name" value="RecR_C"/>
    <property type="match status" value="1"/>
</dbReference>
<dbReference type="Pfam" id="PF21176">
    <property type="entry name" value="RecR_HhH"/>
    <property type="match status" value="1"/>
</dbReference>
<dbReference type="Pfam" id="PF02132">
    <property type="entry name" value="RecR_ZnF"/>
    <property type="match status" value="1"/>
</dbReference>
<dbReference type="Pfam" id="PF13662">
    <property type="entry name" value="Toprim_4"/>
    <property type="match status" value="1"/>
</dbReference>
<dbReference type="SMART" id="SM00493">
    <property type="entry name" value="TOPRIM"/>
    <property type="match status" value="1"/>
</dbReference>
<dbReference type="SUPFAM" id="SSF111304">
    <property type="entry name" value="Recombination protein RecR"/>
    <property type="match status" value="1"/>
</dbReference>
<dbReference type="PROSITE" id="PS01300">
    <property type="entry name" value="RECR"/>
    <property type="match status" value="1"/>
</dbReference>
<dbReference type="PROSITE" id="PS50880">
    <property type="entry name" value="TOPRIM"/>
    <property type="match status" value="1"/>
</dbReference>
<comment type="function">
    <text evidence="1">May play a role in DNA repair. It seems to be involved in an RecBC-independent recombinational process of DNA repair. It may act with RecF and RecO.</text>
</comment>
<comment type="similarity">
    <text evidence="1">Belongs to the RecR family.</text>
</comment>
<proteinExistence type="inferred from homology"/>
<name>RECR_AMOA5</name>
<feature type="chain" id="PRO_1000089703" description="Recombination protein RecR">
    <location>
        <begin position="1"/>
        <end position="200"/>
    </location>
</feature>
<feature type="domain" description="Toprim" evidence="1">
    <location>
        <begin position="81"/>
        <end position="176"/>
    </location>
</feature>
<feature type="zinc finger region" description="C4-type" evidence="1">
    <location>
        <begin position="58"/>
        <end position="73"/>
    </location>
</feature>